<gene>
    <name evidence="1" type="primary">hrcA</name>
    <name type="ordered locus">LIC_10526</name>
</gene>
<organism>
    <name type="scientific">Leptospira interrogans serogroup Icterohaemorrhagiae serovar copenhageni (strain Fiocruz L1-130)</name>
    <dbReference type="NCBI Taxonomy" id="267671"/>
    <lineage>
        <taxon>Bacteria</taxon>
        <taxon>Pseudomonadati</taxon>
        <taxon>Spirochaetota</taxon>
        <taxon>Spirochaetia</taxon>
        <taxon>Leptospirales</taxon>
        <taxon>Leptospiraceae</taxon>
        <taxon>Leptospira</taxon>
    </lineage>
</organism>
<evidence type="ECO:0000255" key="1">
    <source>
        <dbReference type="HAMAP-Rule" id="MF_00081"/>
    </source>
</evidence>
<evidence type="ECO:0000305" key="2"/>
<comment type="function">
    <text evidence="1">Negative regulator of class I heat shock genes (grpE-dnaK-dnaJ and groELS operons). Prevents heat-shock induction of these operons.</text>
</comment>
<comment type="similarity">
    <text evidence="1">Belongs to the HrcA family.</text>
</comment>
<dbReference type="EMBL" id="AF007813">
    <property type="protein sequence ID" value="AAC35414.1"/>
    <property type="molecule type" value="Genomic_DNA"/>
</dbReference>
<dbReference type="EMBL" id="AE016823">
    <property type="protein sequence ID" value="AAS69147.1"/>
    <property type="molecule type" value="Genomic_DNA"/>
</dbReference>
<dbReference type="RefSeq" id="WP_000366219.1">
    <property type="nucleotide sequence ID" value="NC_005823.1"/>
</dbReference>
<dbReference type="SMR" id="P61446"/>
<dbReference type="GeneID" id="61143881"/>
<dbReference type="KEGG" id="lic:LIC_10526"/>
<dbReference type="HOGENOM" id="CLU_050019_1_0_12"/>
<dbReference type="Proteomes" id="UP000007037">
    <property type="component" value="Chromosome I"/>
</dbReference>
<dbReference type="GO" id="GO:0003677">
    <property type="term" value="F:DNA binding"/>
    <property type="evidence" value="ECO:0007669"/>
    <property type="project" value="InterPro"/>
</dbReference>
<dbReference type="GO" id="GO:0045892">
    <property type="term" value="P:negative regulation of DNA-templated transcription"/>
    <property type="evidence" value="ECO:0007669"/>
    <property type="project" value="UniProtKB-UniRule"/>
</dbReference>
<dbReference type="FunFam" id="1.10.10.10:FF:000450">
    <property type="entry name" value="Heat-inducible transcription repressor HrcA"/>
    <property type="match status" value="1"/>
</dbReference>
<dbReference type="Gene3D" id="3.30.450.40">
    <property type="match status" value="1"/>
</dbReference>
<dbReference type="Gene3D" id="3.30.390.60">
    <property type="entry name" value="Heat-inducible transcription repressor hrca homolog, domain 3"/>
    <property type="match status" value="1"/>
</dbReference>
<dbReference type="Gene3D" id="1.10.10.10">
    <property type="entry name" value="Winged helix-like DNA-binding domain superfamily/Winged helix DNA-binding domain"/>
    <property type="match status" value="1"/>
</dbReference>
<dbReference type="HAMAP" id="MF_00081">
    <property type="entry name" value="HrcA"/>
    <property type="match status" value="1"/>
</dbReference>
<dbReference type="InterPro" id="IPR029016">
    <property type="entry name" value="GAF-like_dom_sf"/>
</dbReference>
<dbReference type="InterPro" id="IPR002571">
    <property type="entry name" value="HrcA"/>
</dbReference>
<dbReference type="InterPro" id="IPR021153">
    <property type="entry name" value="HrcA_C"/>
</dbReference>
<dbReference type="InterPro" id="IPR036388">
    <property type="entry name" value="WH-like_DNA-bd_sf"/>
</dbReference>
<dbReference type="InterPro" id="IPR036390">
    <property type="entry name" value="WH_DNA-bd_sf"/>
</dbReference>
<dbReference type="InterPro" id="IPR023120">
    <property type="entry name" value="WHTH_transcript_rep_HrcA_IDD"/>
</dbReference>
<dbReference type="NCBIfam" id="TIGR00331">
    <property type="entry name" value="hrcA"/>
    <property type="match status" value="1"/>
</dbReference>
<dbReference type="PANTHER" id="PTHR34824">
    <property type="entry name" value="HEAT-INDUCIBLE TRANSCRIPTION REPRESSOR HRCA"/>
    <property type="match status" value="1"/>
</dbReference>
<dbReference type="PANTHER" id="PTHR34824:SF1">
    <property type="entry name" value="HEAT-INDUCIBLE TRANSCRIPTION REPRESSOR HRCA"/>
    <property type="match status" value="1"/>
</dbReference>
<dbReference type="Pfam" id="PF01628">
    <property type="entry name" value="HrcA"/>
    <property type="match status" value="1"/>
</dbReference>
<dbReference type="PIRSF" id="PIRSF005485">
    <property type="entry name" value="HrcA"/>
    <property type="match status" value="1"/>
</dbReference>
<dbReference type="SUPFAM" id="SSF55781">
    <property type="entry name" value="GAF domain-like"/>
    <property type="match status" value="1"/>
</dbReference>
<dbReference type="SUPFAM" id="SSF46785">
    <property type="entry name" value="Winged helix' DNA-binding domain"/>
    <property type="match status" value="1"/>
</dbReference>
<accession>P61446</accession>
<accession>O51867</accession>
<feature type="chain" id="PRO_0000182493" description="Heat-inducible transcription repressor HrcA">
    <location>
        <begin position="1"/>
        <end position="342"/>
    </location>
</feature>
<feature type="sequence conflict" description="In Ref. 1; AAC35414." evidence="2" ref="1">
    <original>E</original>
    <variation>K</variation>
    <location>
        <position position="17"/>
    </location>
</feature>
<proteinExistence type="inferred from homology"/>
<sequence>MDLTERHKRILKALVDEFIQENRPVGSKTLFDKHDIGLSPASIRTVLKDLEDFGYLASKHTSGGRIPTERGYRFYVDSLVILYELTLKEKQRIQQEYLKMQFKLDQILKATASVLSSLSNAAGIVIGPAKNLDTLKHIELIHVRGDEILMILVMRSGTVLHRNIFVDQNYSQEALYQVSKYLNDNLKGYDIYEIQNVIIPKLMIRKDGPEDFIRIADLISSAMTPDNSEVTLYIDGFKNLYANFRDEEQQLSQVLSLLDDQGFLKAFFSEYIDQDGVFTIIGKDGDRSMSGVSIITSNYKMGEKKIGALGIIGPQRMDYNRALPLVDFTSKLVSEMVTRISK</sequence>
<keyword id="KW-0678">Repressor</keyword>
<keyword id="KW-0346">Stress response</keyword>
<keyword id="KW-0804">Transcription</keyword>
<keyword id="KW-0805">Transcription regulation</keyword>
<reference key="1">
    <citation type="journal article" date="1998" name="Gene">
        <title>Molecular analysis of the dnaK locus of Leptospira interrogans serovar Copenhageni.</title>
        <authorList>
            <person name="Ballard S.A."/>
            <person name="Go M."/>
            <person name="Segers R.P.A.M."/>
            <person name="Adler B."/>
        </authorList>
    </citation>
    <scope>NUCLEOTIDE SEQUENCE [GENOMIC DNA]</scope>
    <source>
        <strain>Wijnberg</strain>
    </source>
</reference>
<reference key="2">
    <citation type="journal article" date="2004" name="J. Bacteriol.">
        <title>Comparative genomics of two Leptospira interrogans serovars reveals novel insights into physiology and pathogenesis.</title>
        <authorList>
            <person name="Nascimento A.L.T.O."/>
            <person name="Ko A.I."/>
            <person name="Martins E.A.L."/>
            <person name="Monteiro-Vitorello C.B."/>
            <person name="Ho P.L."/>
            <person name="Haake D.A."/>
            <person name="Verjovski-Almeida S."/>
            <person name="Hartskeerl R.A."/>
            <person name="Marques M.V."/>
            <person name="Oliveira M.C."/>
            <person name="Menck C.F.M."/>
            <person name="Leite L.C.C."/>
            <person name="Carrer H."/>
            <person name="Coutinho L.L."/>
            <person name="Degrave W.M."/>
            <person name="Dellagostin O.A."/>
            <person name="El-Dorry H."/>
            <person name="Ferro E.S."/>
            <person name="Ferro M.I.T."/>
            <person name="Furlan L.R."/>
            <person name="Gamberini M."/>
            <person name="Giglioti E.A."/>
            <person name="Goes-Neto A."/>
            <person name="Goldman G.H."/>
            <person name="Goldman M.H.S."/>
            <person name="Harakava R."/>
            <person name="Jeronimo S.M.B."/>
            <person name="Junqueira-de-Azevedo I.L.M."/>
            <person name="Kimura E.T."/>
            <person name="Kuramae E.E."/>
            <person name="Lemos E.G.M."/>
            <person name="Lemos M.V.F."/>
            <person name="Marino C.L."/>
            <person name="Nunes L.R."/>
            <person name="de Oliveira R.C."/>
            <person name="Pereira G.G."/>
            <person name="Reis M.S."/>
            <person name="Schriefer A."/>
            <person name="Siqueira W.J."/>
            <person name="Sommer P."/>
            <person name="Tsai S.M."/>
            <person name="Simpson A.J.G."/>
            <person name="Ferro J.A."/>
            <person name="Camargo L.E.A."/>
            <person name="Kitajima J.P."/>
            <person name="Setubal J.C."/>
            <person name="Van Sluys M.A."/>
        </authorList>
    </citation>
    <scope>NUCLEOTIDE SEQUENCE [LARGE SCALE GENOMIC DNA]</scope>
    <source>
        <strain>Fiocruz L1-130</strain>
    </source>
</reference>
<protein>
    <recommendedName>
        <fullName evidence="1">Heat-inducible transcription repressor HrcA</fullName>
    </recommendedName>
</protein>
<name>HRCA_LEPIC</name>